<accession>A3M0J3</accession>
<reference key="1">
    <citation type="journal article" date="2007" name="Nat. Biotechnol.">
        <title>Genome sequence of the lignocellulose-bioconverting and xylose-fermenting yeast Pichia stipitis.</title>
        <authorList>
            <person name="Jeffries T.W."/>
            <person name="Grigoriev I.V."/>
            <person name="Grimwood J."/>
            <person name="Laplaza J.M."/>
            <person name="Aerts A."/>
            <person name="Salamov A."/>
            <person name="Schmutz J."/>
            <person name="Lindquist E."/>
            <person name="Dehal P."/>
            <person name="Shapiro H."/>
            <person name="Jin Y.-S."/>
            <person name="Passoth V."/>
            <person name="Richardson P.M."/>
        </authorList>
    </citation>
    <scope>NUCLEOTIDE SEQUENCE [LARGE SCALE GENOMIC DNA]</scope>
    <source>
        <strain>ATCC 58785 / CBS 6054 / NBRC 10063 / NRRL Y-11545</strain>
    </source>
</reference>
<name>SET5_PICST</name>
<feature type="chain" id="PRO_0000324471" description="Histone-lysine N-methyltransferase SET5">
    <location>
        <begin position="1"/>
        <end position="478"/>
    </location>
</feature>
<feature type="domain" description="SET" evidence="2">
    <location>
        <begin position="109"/>
        <end position="387"/>
    </location>
</feature>
<evidence type="ECO:0000250" key="1">
    <source>
        <dbReference type="UniProtKB" id="P38890"/>
    </source>
</evidence>
<evidence type="ECO:0000255" key="2">
    <source>
        <dbReference type="PROSITE-ProRule" id="PRU00190"/>
    </source>
</evidence>
<keyword id="KW-0158">Chromosome</keyword>
<keyword id="KW-0963">Cytoplasm</keyword>
<keyword id="KW-0489">Methyltransferase</keyword>
<keyword id="KW-0539">Nucleus</keyword>
<keyword id="KW-1185">Reference proteome</keyword>
<keyword id="KW-0949">S-adenosyl-L-methionine</keyword>
<keyword id="KW-0808">Transferase</keyword>
<protein>
    <recommendedName>
        <fullName>Histone-lysine N-methyltransferase SET5</fullName>
        <ecNumber evidence="1">2.1.1.-</ecNumber>
    </recommendedName>
    <alternativeName>
        <fullName>SET domain-containing protein 5</fullName>
    </alternativeName>
</protein>
<comment type="function">
    <text evidence="1">Histone methyltransferase that monomethylates 'Lys-5', 'Lys-8' and 'Lys-12' of histone H4 (H4K5me1, H4K8me1 and H4K12me1, respectively), thereby controlling gene expression and remodeling chromatin structures.</text>
</comment>
<comment type="catalytic activity">
    <reaction evidence="1">
        <text>L-lysyl-[histone] + S-adenosyl-L-methionine = N(6)-methyl-L-lysyl-[histone] + S-adenosyl-L-homocysteine + H(+)</text>
        <dbReference type="Rhea" id="RHEA:10024"/>
        <dbReference type="Rhea" id="RHEA-COMP:9845"/>
        <dbReference type="Rhea" id="RHEA-COMP:9846"/>
        <dbReference type="ChEBI" id="CHEBI:15378"/>
        <dbReference type="ChEBI" id="CHEBI:29969"/>
        <dbReference type="ChEBI" id="CHEBI:57856"/>
        <dbReference type="ChEBI" id="CHEBI:59789"/>
        <dbReference type="ChEBI" id="CHEBI:61929"/>
    </reaction>
    <physiologicalReaction direction="left-to-right" evidence="1">
        <dbReference type="Rhea" id="RHEA:10025"/>
    </physiologicalReaction>
</comment>
<comment type="subcellular location">
    <subcellularLocation>
        <location evidence="1">Nucleus</location>
    </subcellularLocation>
    <subcellularLocation>
        <location evidence="1">Chromosome</location>
    </subcellularLocation>
    <subcellularLocation>
        <location evidence="1">Cytoplasm</location>
    </subcellularLocation>
</comment>
<comment type="similarity">
    <text evidence="2">Belongs to the class V-like SAM-binding methyltransferase superfamily. Histone-lysine methyltransferase family. SET5 subfamily.</text>
</comment>
<dbReference type="EC" id="2.1.1.-" evidence="1"/>
<dbReference type="EMBL" id="CP000502">
    <property type="protein sequence ID" value="ABN68716.2"/>
    <property type="molecule type" value="Genomic_DNA"/>
</dbReference>
<dbReference type="RefSeq" id="XP_001386745.2">
    <property type="nucleotide sequence ID" value="XM_001386708.1"/>
</dbReference>
<dbReference type="SMR" id="A3M0J3"/>
<dbReference type="FunCoup" id="A3M0J3">
    <property type="interactions" value="692"/>
</dbReference>
<dbReference type="STRING" id="322104.A3M0J3"/>
<dbReference type="GeneID" id="4841014"/>
<dbReference type="KEGG" id="pic:PICST_63965"/>
<dbReference type="eggNOG" id="KOG2084">
    <property type="taxonomic scope" value="Eukaryota"/>
</dbReference>
<dbReference type="HOGENOM" id="CLU_031650_0_0_1"/>
<dbReference type="InParanoid" id="A3M0J3"/>
<dbReference type="OMA" id="LMAMYQQ"/>
<dbReference type="OrthoDB" id="438641at2759"/>
<dbReference type="Proteomes" id="UP000002258">
    <property type="component" value="Chromosome 8"/>
</dbReference>
<dbReference type="GO" id="GO:0005694">
    <property type="term" value="C:chromosome"/>
    <property type="evidence" value="ECO:0007669"/>
    <property type="project" value="UniProtKB-SubCell"/>
</dbReference>
<dbReference type="GO" id="GO:0005737">
    <property type="term" value="C:cytoplasm"/>
    <property type="evidence" value="ECO:0007669"/>
    <property type="project" value="UniProtKB-SubCell"/>
</dbReference>
<dbReference type="GO" id="GO:0005634">
    <property type="term" value="C:nucleus"/>
    <property type="evidence" value="ECO:0007669"/>
    <property type="project" value="UniProtKB-SubCell"/>
</dbReference>
<dbReference type="GO" id="GO:0042799">
    <property type="term" value="F:histone H4K20 methyltransferase activity"/>
    <property type="evidence" value="ECO:0007669"/>
    <property type="project" value="TreeGrafter"/>
</dbReference>
<dbReference type="GO" id="GO:0032259">
    <property type="term" value="P:methylation"/>
    <property type="evidence" value="ECO:0007669"/>
    <property type="project" value="UniProtKB-KW"/>
</dbReference>
<dbReference type="GO" id="GO:0045814">
    <property type="term" value="P:negative regulation of gene expression, epigenetic"/>
    <property type="evidence" value="ECO:0007669"/>
    <property type="project" value="TreeGrafter"/>
</dbReference>
<dbReference type="CDD" id="cd20071">
    <property type="entry name" value="SET_SMYD"/>
    <property type="match status" value="1"/>
</dbReference>
<dbReference type="Gene3D" id="1.10.220.160">
    <property type="match status" value="1"/>
</dbReference>
<dbReference type="Gene3D" id="6.10.140.2220">
    <property type="match status" value="1"/>
</dbReference>
<dbReference type="Gene3D" id="2.170.270.10">
    <property type="entry name" value="SET domain"/>
    <property type="match status" value="1"/>
</dbReference>
<dbReference type="InterPro" id="IPR001214">
    <property type="entry name" value="SET_dom"/>
</dbReference>
<dbReference type="InterPro" id="IPR046341">
    <property type="entry name" value="SET_dom_sf"/>
</dbReference>
<dbReference type="PANTHER" id="PTHR46402:SF2">
    <property type="entry name" value="HISTONE-LYSINE N-TRIMETHYLTRANSFERASE SMYD5"/>
    <property type="match status" value="1"/>
</dbReference>
<dbReference type="PANTHER" id="PTHR46402">
    <property type="entry name" value="SET AND MYND DOMAIN-CONTAINING PROTEIN 5"/>
    <property type="match status" value="1"/>
</dbReference>
<dbReference type="Pfam" id="PF00856">
    <property type="entry name" value="SET"/>
    <property type="match status" value="1"/>
</dbReference>
<dbReference type="SMART" id="SM00317">
    <property type="entry name" value="SET"/>
    <property type="match status" value="1"/>
</dbReference>
<dbReference type="SUPFAM" id="SSF82199">
    <property type="entry name" value="SET domain"/>
    <property type="match status" value="1"/>
</dbReference>
<dbReference type="PROSITE" id="PS50280">
    <property type="entry name" value="SET"/>
    <property type="match status" value="1"/>
</dbReference>
<proteinExistence type="inferred from homology"/>
<gene>
    <name type="primary">SET5</name>
    <name type="ORF">PICST_63965</name>
</gene>
<sequence>MTAEGLEKKIEVISINDSVPQETGPVVPHERQVVDAIIAIWKEDPTTESLGIPKLHAIVKNKYPNWSVSEKRVKTLLKKFGLTPNTNTEQFTYASDITSEDTPHIQLPAKIQIVMTSKRGKGLYAKHKIAKGELIWEETPLFFIPPLANINLVKTGKACSHCGKLLQTTTGSSMLKGLDCNVCPEVWCSQQCKKLDSAIHGLLKHNVYNPNKRLTSSKIIDSESFLELQEYCLKESWNALYAIALIYANILLDKTGVKEKQFRAMARVSQDIRYKALNSSAGAFDTLSGGALFVQEQQETLWREGFEKFIRVFPTSTSKLTYKEFLFMMGTYNINNLDSCIFLTQSHLNHNCDPNTNVDTSPVRTEGLKVYAARDIRAGEELTTTYVNPAHTVQQRQRELRVNWGFICGCQKCKEDVKIQHRRKSSTVPAASKSEIRDMLKAAENHVGEEGIELTPPEVSGERRKSVRFDEKVIAVQE</sequence>
<organism>
    <name type="scientific">Scheffersomyces stipitis (strain ATCC 58785 / CBS 6054 / NBRC 10063 / NRRL Y-11545)</name>
    <name type="common">Yeast</name>
    <name type="synonym">Pichia stipitis</name>
    <dbReference type="NCBI Taxonomy" id="322104"/>
    <lineage>
        <taxon>Eukaryota</taxon>
        <taxon>Fungi</taxon>
        <taxon>Dikarya</taxon>
        <taxon>Ascomycota</taxon>
        <taxon>Saccharomycotina</taxon>
        <taxon>Pichiomycetes</taxon>
        <taxon>Debaryomycetaceae</taxon>
        <taxon>Scheffersomyces</taxon>
    </lineage>
</organism>